<protein>
    <recommendedName>
        <fullName evidence="1">Serine hydroxymethyltransferase</fullName>
        <shortName evidence="1">SHMT</shortName>
        <shortName evidence="1">Serine methylase</shortName>
        <ecNumber evidence="1">2.1.2.1</ecNumber>
    </recommendedName>
</protein>
<sequence length="416" mass="44990">MFSKSVTLAQYDPDLAAAIAQEDRRQQDHVELIASENYVSCAVMEAQGSQLTNKYAEGYPAKRYYGGCEYVDIVEQLAIDRVKELFGAAYANVQPHSGSQANQAVYASVLKPGDTILGMSLAHGGHLTHGASVNISGKLYNAVTYGLDENEVLDYAEVERLALEHKPKMIVAGASAYALQIDWAKFREIADKVGAYLFVDMAHYAGLVAGGEYPNPVPFCDFVTTTTHKTLRGPRGGVILCRDNTHEKALNSSIFPSLQGGPLMHVIAAKAVAFKEALQPEFKQYAKQVKINAAVMAEELVKRGLRIVSGRTESHVFLVDLQPMKITGKAAEAALGKAHITVNKNAIPNDPEKPFVTSGIRIGSAAMTTRGFNETDARVLSNLVADVLANPEDEANLAKVRGQVTALCDKYPVYGT</sequence>
<accession>Q5F8C0</accession>
<proteinExistence type="inferred from homology"/>
<reference key="1">
    <citation type="journal article" date="1999" name="Mol. Microbiol.">
        <title>The opcA and (psi)opcB regions in Neisseria: genes, pseudogenes, deletions, insertion elements and DNA islands.</title>
        <authorList>
            <person name="Zhu P."/>
            <person name="Morelli G."/>
            <person name="Achtman M."/>
        </authorList>
    </citation>
    <scope>NUCLEOTIDE SEQUENCE [GENOMIC DNA]</scope>
</reference>
<reference key="2">
    <citation type="submission" date="2003-03" db="EMBL/GenBank/DDBJ databases">
        <title>The complete genome sequence of Neisseria gonorrhoeae.</title>
        <authorList>
            <person name="Lewis L.A."/>
            <person name="Gillaspy A.F."/>
            <person name="McLaughlin R.E."/>
            <person name="Gipson M."/>
            <person name="Ducey T.F."/>
            <person name="Ownbey T."/>
            <person name="Hartman K."/>
            <person name="Nydick C."/>
            <person name="Carson M.B."/>
            <person name="Vaughn J."/>
            <person name="Thomson C."/>
            <person name="Song L."/>
            <person name="Lin S."/>
            <person name="Yuan X."/>
            <person name="Najar F."/>
            <person name="Zhan M."/>
            <person name="Ren Q."/>
            <person name="Zhu H."/>
            <person name="Qi S."/>
            <person name="Kenton S.M."/>
            <person name="Lai H."/>
            <person name="White J.D."/>
            <person name="Clifton S."/>
            <person name="Roe B.A."/>
            <person name="Dyer D.W."/>
        </authorList>
    </citation>
    <scope>NUCLEOTIDE SEQUENCE [LARGE SCALE GENOMIC DNA]</scope>
    <source>
        <strain>ATCC 700825 / FA 1090</strain>
    </source>
</reference>
<evidence type="ECO:0000255" key="1">
    <source>
        <dbReference type="HAMAP-Rule" id="MF_00051"/>
    </source>
</evidence>
<dbReference type="EC" id="2.1.2.1" evidence="1"/>
<dbReference type="EMBL" id="AJ242839">
    <property type="protein sequence ID" value="CAB45001.1"/>
    <property type="molecule type" value="Genomic_DNA"/>
</dbReference>
<dbReference type="EMBL" id="AE004969">
    <property type="protein sequence ID" value="AAW89567.1"/>
    <property type="molecule type" value="Genomic_DNA"/>
</dbReference>
<dbReference type="RefSeq" id="WP_010951137.1">
    <property type="nucleotide sequence ID" value="NC_002946.2"/>
</dbReference>
<dbReference type="RefSeq" id="YP_207979.1">
    <property type="nucleotide sequence ID" value="NC_002946.2"/>
</dbReference>
<dbReference type="SMR" id="Q5F8C0"/>
<dbReference type="STRING" id="242231.NGO_0866"/>
<dbReference type="KEGG" id="ngo:NGO_0866"/>
<dbReference type="PATRIC" id="fig|242231.10.peg.1022"/>
<dbReference type="HOGENOM" id="CLU_022477_2_1_4"/>
<dbReference type="UniPathway" id="UPA00193"/>
<dbReference type="UniPathway" id="UPA00288">
    <property type="reaction ID" value="UER01023"/>
</dbReference>
<dbReference type="Proteomes" id="UP000000535">
    <property type="component" value="Chromosome"/>
</dbReference>
<dbReference type="GO" id="GO:0005829">
    <property type="term" value="C:cytosol"/>
    <property type="evidence" value="ECO:0007669"/>
    <property type="project" value="TreeGrafter"/>
</dbReference>
<dbReference type="GO" id="GO:0004372">
    <property type="term" value="F:glycine hydroxymethyltransferase activity"/>
    <property type="evidence" value="ECO:0007669"/>
    <property type="project" value="UniProtKB-UniRule"/>
</dbReference>
<dbReference type="GO" id="GO:0030170">
    <property type="term" value="F:pyridoxal phosphate binding"/>
    <property type="evidence" value="ECO:0007669"/>
    <property type="project" value="UniProtKB-UniRule"/>
</dbReference>
<dbReference type="GO" id="GO:0019264">
    <property type="term" value="P:glycine biosynthetic process from serine"/>
    <property type="evidence" value="ECO:0007669"/>
    <property type="project" value="UniProtKB-UniRule"/>
</dbReference>
<dbReference type="GO" id="GO:0035999">
    <property type="term" value="P:tetrahydrofolate interconversion"/>
    <property type="evidence" value="ECO:0007669"/>
    <property type="project" value="UniProtKB-UniRule"/>
</dbReference>
<dbReference type="CDD" id="cd00378">
    <property type="entry name" value="SHMT"/>
    <property type="match status" value="1"/>
</dbReference>
<dbReference type="FunFam" id="3.40.640.10:FF:000001">
    <property type="entry name" value="Serine hydroxymethyltransferase"/>
    <property type="match status" value="1"/>
</dbReference>
<dbReference type="FunFam" id="3.90.1150.10:FF:000003">
    <property type="entry name" value="Serine hydroxymethyltransferase"/>
    <property type="match status" value="1"/>
</dbReference>
<dbReference type="Gene3D" id="3.90.1150.10">
    <property type="entry name" value="Aspartate Aminotransferase, domain 1"/>
    <property type="match status" value="1"/>
</dbReference>
<dbReference type="Gene3D" id="3.40.640.10">
    <property type="entry name" value="Type I PLP-dependent aspartate aminotransferase-like (Major domain)"/>
    <property type="match status" value="1"/>
</dbReference>
<dbReference type="HAMAP" id="MF_00051">
    <property type="entry name" value="SHMT"/>
    <property type="match status" value="1"/>
</dbReference>
<dbReference type="InterPro" id="IPR015424">
    <property type="entry name" value="PyrdxlP-dep_Trfase"/>
</dbReference>
<dbReference type="InterPro" id="IPR015421">
    <property type="entry name" value="PyrdxlP-dep_Trfase_major"/>
</dbReference>
<dbReference type="InterPro" id="IPR015422">
    <property type="entry name" value="PyrdxlP-dep_Trfase_small"/>
</dbReference>
<dbReference type="InterPro" id="IPR001085">
    <property type="entry name" value="Ser_HO-MeTrfase"/>
</dbReference>
<dbReference type="InterPro" id="IPR049943">
    <property type="entry name" value="Ser_HO-MeTrfase-like"/>
</dbReference>
<dbReference type="InterPro" id="IPR019798">
    <property type="entry name" value="Ser_HO-MeTrfase_PLP_BS"/>
</dbReference>
<dbReference type="InterPro" id="IPR039429">
    <property type="entry name" value="SHMT-like_dom"/>
</dbReference>
<dbReference type="NCBIfam" id="NF000586">
    <property type="entry name" value="PRK00011.1"/>
    <property type="match status" value="1"/>
</dbReference>
<dbReference type="PANTHER" id="PTHR11680">
    <property type="entry name" value="SERINE HYDROXYMETHYLTRANSFERASE"/>
    <property type="match status" value="1"/>
</dbReference>
<dbReference type="PANTHER" id="PTHR11680:SF50">
    <property type="entry name" value="SERINE HYDROXYMETHYLTRANSFERASE"/>
    <property type="match status" value="1"/>
</dbReference>
<dbReference type="Pfam" id="PF00464">
    <property type="entry name" value="SHMT"/>
    <property type="match status" value="1"/>
</dbReference>
<dbReference type="PIRSF" id="PIRSF000412">
    <property type="entry name" value="SHMT"/>
    <property type="match status" value="1"/>
</dbReference>
<dbReference type="SUPFAM" id="SSF53383">
    <property type="entry name" value="PLP-dependent transferases"/>
    <property type="match status" value="1"/>
</dbReference>
<dbReference type="PROSITE" id="PS00096">
    <property type="entry name" value="SHMT"/>
    <property type="match status" value="1"/>
</dbReference>
<name>GLYA_NEIG1</name>
<feature type="chain" id="PRO_0000113620" description="Serine hydroxymethyltransferase">
    <location>
        <begin position="1"/>
        <end position="416"/>
    </location>
</feature>
<feature type="binding site" evidence="1">
    <location>
        <position position="121"/>
    </location>
    <ligand>
        <name>(6S)-5,6,7,8-tetrahydrofolate</name>
        <dbReference type="ChEBI" id="CHEBI:57453"/>
    </ligand>
</feature>
<feature type="binding site" evidence="1">
    <location>
        <begin position="125"/>
        <end position="127"/>
    </location>
    <ligand>
        <name>(6S)-5,6,7,8-tetrahydrofolate</name>
        <dbReference type="ChEBI" id="CHEBI:57453"/>
    </ligand>
</feature>
<feature type="site" description="Plays an important role in substrate specificity" evidence="1">
    <location>
        <position position="228"/>
    </location>
</feature>
<feature type="modified residue" description="N6-(pyridoxal phosphate)lysine" evidence="1">
    <location>
        <position position="229"/>
    </location>
</feature>
<organism>
    <name type="scientific">Neisseria gonorrhoeae (strain ATCC 700825 / FA 1090)</name>
    <dbReference type="NCBI Taxonomy" id="242231"/>
    <lineage>
        <taxon>Bacteria</taxon>
        <taxon>Pseudomonadati</taxon>
        <taxon>Pseudomonadota</taxon>
        <taxon>Betaproteobacteria</taxon>
        <taxon>Neisseriales</taxon>
        <taxon>Neisseriaceae</taxon>
        <taxon>Neisseria</taxon>
    </lineage>
</organism>
<comment type="function">
    <text evidence="1">Catalyzes the reversible interconversion of serine and glycine with tetrahydrofolate (THF) serving as the one-carbon carrier. This reaction serves as the major source of one-carbon groups required for the biosynthesis of purines, thymidylate, methionine, and other important biomolecules. Also exhibits THF-independent aldolase activity toward beta-hydroxyamino acids, producing glycine and aldehydes, via a retro-aldol mechanism.</text>
</comment>
<comment type="catalytic activity">
    <reaction evidence="1">
        <text>(6R)-5,10-methylene-5,6,7,8-tetrahydrofolate + glycine + H2O = (6S)-5,6,7,8-tetrahydrofolate + L-serine</text>
        <dbReference type="Rhea" id="RHEA:15481"/>
        <dbReference type="ChEBI" id="CHEBI:15377"/>
        <dbReference type="ChEBI" id="CHEBI:15636"/>
        <dbReference type="ChEBI" id="CHEBI:33384"/>
        <dbReference type="ChEBI" id="CHEBI:57305"/>
        <dbReference type="ChEBI" id="CHEBI:57453"/>
        <dbReference type="EC" id="2.1.2.1"/>
    </reaction>
</comment>
<comment type="cofactor">
    <cofactor evidence="1">
        <name>pyridoxal 5'-phosphate</name>
        <dbReference type="ChEBI" id="CHEBI:597326"/>
    </cofactor>
</comment>
<comment type="pathway">
    <text evidence="1">One-carbon metabolism; tetrahydrofolate interconversion.</text>
</comment>
<comment type="pathway">
    <text evidence="1">Amino-acid biosynthesis; glycine biosynthesis; glycine from L-serine: step 1/1.</text>
</comment>
<comment type="subunit">
    <text evidence="1">Homodimer.</text>
</comment>
<comment type="subcellular location">
    <subcellularLocation>
        <location evidence="1">Cytoplasm</location>
    </subcellularLocation>
</comment>
<comment type="similarity">
    <text evidence="1">Belongs to the SHMT family.</text>
</comment>
<gene>
    <name evidence="1" type="primary">glyA</name>
    <name type="ordered locus">NGO_0866</name>
</gene>
<keyword id="KW-0028">Amino-acid biosynthesis</keyword>
<keyword id="KW-0963">Cytoplasm</keyword>
<keyword id="KW-0554">One-carbon metabolism</keyword>
<keyword id="KW-0663">Pyridoxal phosphate</keyword>
<keyword id="KW-1185">Reference proteome</keyword>
<keyword id="KW-0808">Transferase</keyword>